<reference key="1">
    <citation type="journal article" date="2011" name="MBio">
        <title>Novel metabolic attributes of the genus Cyanothece, comprising a group of unicellular nitrogen-fixing Cyanobacteria.</title>
        <authorList>
            <person name="Bandyopadhyay A."/>
            <person name="Elvitigala T."/>
            <person name="Welsh E."/>
            <person name="Stockel J."/>
            <person name="Liberton M."/>
            <person name="Min H."/>
            <person name="Sherman L.A."/>
            <person name="Pakrasi H.B."/>
        </authorList>
    </citation>
    <scope>NUCLEOTIDE SEQUENCE [LARGE SCALE GENOMIC DNA]</scope>
    <source>
        <strain>PCC 8801 / RF-1</strain>
    </source>
</reference>
<organism>
    <name type="scientific">Rippkaea orientalis (strain PCC 8801 / RF-1)</name>
    <name type="common">Cyanothece sp. (strain PCC 8801)</name>
    <dbReference type="NCBI Taxonomy" id="41431"/>
    <lineage>
        <taxon>Bacteria</taxon>
        <taxon>Bacillati</taxon>
        <taxon>Cyanobacteriota</taxon>
        <taxon>Cyanophyceae</taxon>
        <taxon>Oscillatoriophycideae</taxon>
        <taxon>Chroococcales</taxon>
        <taxon>Aphanothecaceae</taxon>
        <taxon>Rippkaea</taxon>
        <taxon>Rippkaea orientalis</taxon>
    </lineage>
</organism>
<accession>B7K508</accession>
<keyword id="KW-0004">4Fe-4S</keyword>
<keyword id="KW-0408">Iron</keyword>
<keyword id="KW-0411">Iron-sulfur</keyword>
<keyword id="KW-0456">Lyase</keyword>
<keyword id="KW-0479">Metal-binding</keyword>
<keyword id="KW-1185">Reference proteome</keyword>
<keyword id="KW-0949">S-adenosyl-L-methionine</keyword>
<keyword id="KW-0784">Thiamine biosynthesis</keyword>
<keyword id="KW-0862">Zinc</keyword>
<proteinExistence type="inferred from homology"/>
<comment type="function">
    <text evidence="1">Catalyzes the synthesis of the hydroxymethylpyrimidine phosphate (HMP-P) moiety of thiamine from aminoimidazole ribotide (AIR) in a radical S-adenosyl-L-methionine (SAM)-dependent reaction.</text>
</comment>
<comment type="catalytic activity">
    <reaction evidence="1">
        <text>5-amino-1-(5-phospho-beta-D-ribosyl)imidazole + S-adenosyl-L-methionine = 4-amino-2-methyl-5-(phosphooxymethyl)pyrimidine + CO + 5'-deoxyadenosine + formate + L-methionine + 3 H(+)</text>
        <dbReference type="Rhea" id="RHEA:24840"/>
        <dbReference type="ChEBI" id="CHEBI:15378"/>
        <dbReference type="ChEBI" id="CHEBI:15740"/>
        <dbReference type="ChEBI" id="CHEBI:17245"/>
        <dbReference type="ChEBI" id="CHEBI:17319"/>
        <dbReference type="ChEBI" id="CHEBI:57844"/>
        <dbReference type="ChEBI" id="CHEBI:58354"/>
        <dbReference type="ChEBI" id="CHEBI:59789"/>
        <dbReference type="ChEBI" id="CHEBI:137981"/>
        <dbReference type="EC" id="4.1.99.17"/>
    </reaction>
</comment>
<comment type="cofactor">
    <cofactor evidence="1">
        <name>[4Fe-4S] cluster</name>
        <dbReference type="ChEBI" id="CHEBI:49883"/>
    </cofactor>
    <text evidence="1">Binds 1 [4Fe-4S] cluster per subunit. The cluster is coordinated with 3 cysteines and an exchangeable S-adenosyl-L-methionine.</text>
</comment>
<comment type="pathway">
    <text evidence="1">Cofactor biosynthesis; thiamine diphosphate biosynthesis.</text>
</comment>
<comment type="similarity">
    <text evidence="1">Belongs to the ThiC family.</text>
</comment>
<gene>
    <name evidence="1" type="primary">thiC</name>
    <name type="ordered locus">PCC8801_2662</name>
</gene>
<name>THIC_RIPO1</name>
<feature type="chain" id="PRO_1000198052" description="Phosphomethylpyrimidine synthase">
    <location>
        <begin position="1"/>
        <end position="460"/>
    </location>
</feature>
<feature type="binding site" evidence="1">
    <location>
        <position position="80"/>
    </location>
    <ligand>
        <name>substrate</name>
    </ligand>
</feature>
<feature type="binding site" evidence="1">
    <location>
        <position position="109"/>
    </location>
    <ligand>
        <name>substrate</name>
    </ligand>
</feature>
<feature type="binding site" evidence="1">
    <location>
        <position position="139"/>
    </location>
    <ligand>
        <name>substrate</name>
    </ligand>
</feature>
<feature type="binding site" evidence="1">
    <location>
        <position position="175"/>
    </location>
    <ligand>
        <name>substrate</name>
    </ligand>
</feature>
<feature type="binding site" evidence="1">
    <location>
        <begin position="195"/>
        <end position="197"/>
    </location>
    <ligand>
        <name>substrate</name>
    </ligand>
</feature>
<feature type="binding site" evidence="1">
    <location>
        <begin position="236"/>
        <end position="239"/>
    </location>
    <ligand>
        <name>substrate</name>
    </ligand>
</feature>
<feature type="binding site" evidence="1">
    <location>
        <position position="275"/>
    </location>
    <ligand>
        <name>substrate</name>
    </ligand>
</feature>
<feature type="binding site" evidence="1">
    <location>
        <position position="279"/>
    </location>
    <ligand>
        <name>Zn(2+)</name>
        <dbReference type="ChEBI" id="CHEBI:29105"/>
    </ligand>
</feature>
<feature type="binding site" evidence="1">
    <location>
        <position position="302"/>
    </location>
    <ligand>
        <name>substrate</name>
    </ligand>
</feature>
<feature type="binding site" evidence="1">
    <location>
        <position position="343"/>
    </location>
    <ligand>
        <name>Zn(2+)</name>
        <dbReference type="ChEBI" id="CHEBI:29105"/>
    </ligand>
</feature>
<feature type="binding site" evidence="1">
    <location>
        <position position="423"/>
    </location>
    <ligand>
        <name>[4Fe-4S] cluster</name>
        <dbReference type="ChEBI" id="CHEBI:49883"/>
        <note>4Fe-4S-S-AdoMet</note>
    </ligand>
</feature>
<feature type="binding site" evidence="1">
    <location>
        <position position="426"/>
    </location>
    <ligand>
        <name>[4Fe-4S] cluster</name>
        <dbReference type="ChEBI" id="CHEBI:49883"/>
        <note>4Fe-4S-S-AdoMet</note>
    </ligand>
</feature>
<feature type="binding site" evidence="1">
    <location>
        <position position="431"/>
    </location>
    <ligand>
        <name>[4Fe-4S] cluster</name>
        <dbReference type="ChEBI" id="CHEBI:49883"/>
        <note>4Fe-4S-S-AdoMet</note>
    </ligand>
</feature>
<dbReference type="EC" id="4.1.99.17" evidence="1"/>
<dbReference type="EMBL" id="CP001287">
    <property type="protein sequence ID" value="ACK66664.1"/>
    <property type="molecule type" value="Genomic_DNA"/>
</dbReference>
<dbReference type="RefSeq" id="WP_012595931.1">
    <property type="nucleotide sequence ID" value="NC_011726.1"/>
</dbReference>
<dbReference type="SMR" id="B7K508"/>
<dbReference type="STRING" id="41431.PCC8801_2662"/>
<dbReference type="KEGG" id="cyp:PCC8801_2662"/>
<dbReference type="eggNOG" id="COG0422">
    <property type="taxonomic scope" value="Bacteria"/>
</dbReference>
<dbReference type="HOGENOM" id="CLU_013181_2_1_3"/>
<dbReference type="OrthoDB" id="9805897at2"/>
<dbReference type="UniPathway" id="UPA00060"/>
<dbReference type="Proteomes" id="UP000008204">
    <property type="component" value="Chromosome"/>
</dbReference>
<dbReference type="GO" id="GO:0005829">
    <property type="term" value="C:cytosol"/>
    <property type="evidence" value="ECO:0007669"/>
    <property type="project" value="TreeGrafter"/>
</dbReference>
<dbReference type="GO" id="GO:0051539">
    <property type="term" value="F:4 iron, 4 sulfur cluster binding"/>
    <property type="evidence" value="ECO:0007669"/>
    <property type="project" value="UniProtKB-KW"/>
</dbReference>
<dbReference type="GO" id="GO:0016830">
    <property type="term" value="F:carbon-carbon lyase activity"/>
    <property type="evidence" value="ECO:0007669"/>
    <property type="project" value="InterPro"/>
</dbReference>
<dbReference type="GO" id="GO:0008270">
    <property type="term" value="F:zinc ion binding"/>
    <property type="evidence" value="ECO:0007669"/>
    <property type="project" value="UniProtKB-UniRule"/>
</dbReference>
<dbReference type="GO" id="GO:0009228">
    <property type="term" value="P:thiamine biosynthetic process"/>
    <property type="evidence" value="ECO:0007669"/>
    <property type="project" value="UniProtKB-KW"/>
</dbReference>
<dbReference type="GO" id="GO:0009229">
    <property type="term" value="P:thiamine diphosphate biosynthetic process"/>
    <property type="evidence" value="ECO:0007669"/>
    <property type="project" value="UniProtKB-UniRule"/>
</dbReference>
<dbReference type="FunFam" id="3.20.20.540:FF:000001">
    <property type="entry name" value="Phosphomethylpyrimidine synthase"/>
    <property type="match status" value="1"/>
</dbReference>
<dbReference type="Gene3D" id="6.10.250.620">
    <property type="match status" value="1"/>
</dbReference>
<dbReference type="Gene3D" id="3.20.20.540">
    <property type="entry name" value="Radical SAM ThiC family, central domain"/>
    <property type="match status" value="1"/>
</dbReference>
<dbReference type="HAMAP" id="MF_00089">
    <property type="entry name" value="ThiC"/>
    <property type="match status" value="1"/>
</dbReference>
<dbReference type="InterPro" id="IPR037509">
    <property type="entry name" value="ThiC"/>
</dbReference>
<dbReference type="InterPro" id="IPR038521">
    <property type="entry name" value="ThiC/Bza_core_dom"/>
</dbReference>
<dbReference type="InterPro" id="IPR002817">
    <property type="entry name" value="ThiC/BzaA/B"/>
</dbReference>
<dbReference type="NCBIfam" id="NF006763">
    <property type="entry name" value="PRK09284.1"/>
    <property type="match status" value="1"/>
</dbReference>
<dbReference type="NCBIfam" id="NF009895">
    <property type="entry name" value="PRK13352.1"/>
    <property type="match status" value="1"/>
</dbReference>
<dbReference type="NCBIfam" id="TIGR00190">
    <property type="entry name" value="thiC"/>
    <property type="match status" value="1"/>
</dbReference>
<dbReference type="PANTHER" id="PTHR30557:SF1">
    <property type="entry name" value="PHOSPHOMETHYLPYRIMIDINE SYNTHASE, CHLOROPLASTIC"/>
    <property type="match status" value="1"/>
</dbReference>
<dbReference type="PANTHER" id="PTHR30557">
    <property type="entry name" value="THIAMINE BIOSYNTHESIS PROTEIN THIC"/>
    <property type="match status" value="1"/>
</dbReference>
<dbReference type="Pfam" id="PF01964">
    <property type="entry name" value="ThiC_Rad_SAM"/>
    <property type="match status" value="1"/>
</dbReference>
<dbReference type="SFLD" id="SFLDF00407">
    <property type="entry name" value="phosphomethylpyrimidine_syntha"/>
    <property type="match status" value="1"/>
</dbReference>
<dbReference type="SFLD" id="SFLDG01114">
    <property type="entry name" value="phosphomethylpyrimidine_syntha"/>
    <property type="match status" value="1"/>
</dbReference>
<dbReference type="SFLD" id="SFLDS00113">
    <property type="entry name" value="Radical_SAM_Phosphomethylpyrim"/>
    <property type="match status" value="1"/>
</dbReference>
<protein>
    <recommendedName>
        <fullName evidence="1">Phosphomethylpyrimidine synthase</fullName>
        <ecNumber evidence="1">4.1.99.17</ecNumber>
    </recommendedName>
    <alternativeName>
        <fullName evidence="1">Hydroxymethylpyrimidine phosphate synthase</fullName>
        <shortName evidence="1">HMP-P synthase</shortName>
        <shortName evidence="1">HMP-phosphate synthase</shortName>
        <shortName evidence="1">HMPP synthase</shortName>
    </alternativeName>
    <alternativeName>
        <fullName evidence="1">Thiamine biosynthesis protein ThiC</fullName>
    </alternativeName>
</protein>
<sequence>MRSQWVAKRRGQSNVSQMHYARQGMITEEMDYVAKRENLPPDLIRQEVARGRMIIPANINHLNLEPMAIGIASKCKVNANIGASPNSSNLEEEVAKLNLAVKYGADTVMDLSTGGGDLDTIRTAIINASPVPIGTVPIYQAVESVHGNIEKLTPDDFLHIIEKHAQQGVDYMTIHAGLLIEYLPLVRSRLTGIVSRGGGIIAKWMLHHHKQNPLYTHFDEIIEIFKKYDVSFSLGDSLRPGCTHDASDEAQLSELKTLGQLTRRAWEHDVQVMVEGPGHVPMDQIEFNVKKQMEECSEAPFYVLGPLVTDIAPGYDHITSAIGAAMAGWYGTAMLCYVTPKEHLGLPDAEDVRNGLIAYKIAAHAADIARQRPGARDRDDELSKARYNFDWNRQFELSLDPDRAREYHDETLPADIYKTAEFCSMCGPKFCPMQTKVDADALTELEKFLAEQKNKEAIAH</sequence>
<evidence type="ECO:0000255" key="1">
    <source>
        <dbReference type="HAMAP-Rule" id="MF_00089"/>
    </source>
</evidence>